<keyword id="KW-0027">Amidation</keyword>
<keyword id="KW-0044">Antibiotic</keyword>
<keyword id="KW-0929">Antimicrobial</keyword>
<keyword id="KW-0211">Defensin</keyword>
<keyword id="KW-0903">Direct protein sequencing</keyword>
<keyword id="KW-1015">Disulfide bond</keyword>
<keyword id="KW-0732">Signal</keyword>
<dbReference type="EMBL" id="HQ599307">
    <property type="protein sequence ID" value="AEE69605.1"/>
    <property type="molecule type" value="mRNA"/>
</dbReference>
<dbReference type="EMBL" id="KT253226">
    <property type="protein sequence ID" value="ALQ10737.1"/>
    <property type="molecule type" value="mRNA"/>
</dbReference>
<dbReference type="SMR" id="F6KSI8"/>
<dbReference type="GO" id="GO:0042742">
    <property type="term" value="P:defense response to bacterium"/>
    <property type="evidence" value="ECO:0007669"/>
    <property type="project" value="UniProtKB-KW"/>
</dbReference>
<proteinExistence type="evidence at protein level"/>
<feature type="signal peptide" evidence="1">
    <location>
        <begin position="1"/>
        <end position="22"/>
    </location>
</feature>
<feature type="propeptide" id="PRO_0000422178" evidence="7">
    <location>
        <begin position="23"/>
        <end position="26"/>
    </location>
</feature>
<feature type="peptide" id="PRO_0000445467" description="Panusin" evidence="3">
    <location>
        <begin position="27"/>
        <end position="65"/>
    </location>
</feature>
<feature type="modified residue" description="Tyrosine amide" evidence="3">
    <location>
        <position position="65"/>
    </location>
</feature>
<feature type="disulfide bond" evidence="5">
    <location>
        <begin position="32"/>
        <end position="54"/>
    </location>
</feature>
<feature type="disulfide bond" evidence="5">
    <location>
        <begin position="39"/>
        <end position="61"/>
    </location>
</feature>
<feature type="disulfide bond" evidence="5">
    <location>
        <begin position="44"/>
        <end position="60"/>
    </location>
</feature>
<feature type="sequence conflict" description="In Ref. 1; AEE69605." evidence="6" ref="1">
    <original>VL</original>
    <variation>IV</variation>
    <location>
        <begin position="6"/>
        <end position="7"/>
    </location>
</feature>
<feature type="sequence conflict" description="In Ref. 1; AEE69605." evidence="6" ref="1">
    <original>RSYG</original>
    <variation>HAYV</variation>
    <location>
        <begin position="63"/>
        <end position="66"/>
    </location>
</feature>
<accession>F6KSI8</accession>
<accession>A0A0S2XGP2</accession>
<protein>
    <recommendedName>
        <fullName evidence="5">Panusin</fullName>
    </recommendedName>
    <alternativeName>
        <fullName evidence="4">Defensin-like peptide 7</fullName>
        <shortName evidence="4">PaD7</shortName>
    </alternativeName>
</protein>
<sequence>MKTKAVLMLMLLVLVAATLVQGEPEPSYVGDCGSNGGSCVSSYCPYGNRLNYFCPLGRTCCRRSYG</sequence>
<organism>
    <name type="scientific">Panulirus argus</name>
    <name type="common">Caribbean spiny lobster</name>
    <name type="synonym">Palinurus argus</name>
    <dbReference type="NCBI Taxonomy" id="6737"/>
    <lineage>
        <taxon>Eukaryota</taxon>
        <taxon>Metazoa</taxon>
        <taxon>Ecdysozoa</taxon>
        <taxon>Arthropoda</taxon>
        <taxon>Crustacea</taxon>
        <taxon>Multicrustacea</taxon>
        <taxon>Malacostraca</taxon>
        <taxon>Eumalacostraca</taxon>
        <taxon>Eucarida</taxon>
        <taxon>Decapoda</taxon>
        <taxon>Pleocyemata</taxon>
        <taxon>Achelata</taxon>
        <taxon>Palinuroidea</taxon>
        <taxon>Palinuridae</taxon>
        <taxon>Panulirus</taxon>
    </lineage>
</organism>
<reference evidence="8" key="1">
    <citation type="journal article" date="2012" name="Fish Shellfish Immunol.">
        <title>Defensin like peptide from Panulirus argus relates structurally with beta defensin from vertebrates.</title>
        <authorList>
            <person name="Montero-Alejo V."/>
            <person name="Acosta-Alba J."/>
            <person name="Perdomo-Morales R."/>
            <person name="Perera E."/>
            <person name="Hernandez-Rodriguez E.W."/>
            <person name="Estrada M.P."/>
            <person name="Porto-Verdecia M."/>
        </authorList>
    </citation>
    <scope>NUCLEOTIDE SEQUENCE [MRNA]</scope>
    <source>
        <tissue evidence="2">Hemolymph</tissue>
    </source>
</reference>
<reference evidence="6" key="2">
    <citation type="journal article" date="2017" name="Dev. Comp. Immunol.">
        <title>Panusin represents a new family of beta-defensin-like peptides in invertebrates.</title>
        <authorList>
            <person name="Montero-Alejo V."/>
            <person name="Corzo G."/>
            <person name="Porro-Suardiaz J."/>
            <person name="Pardo-Ruiz Z."/>
            <person name="Perera E."/>
            <person name="Rodriguez-Viera L."/>
            <person name="Sanchez-Diaz G."/>
            <person name="Hernandez-Rodriguez E.W."/>
            <person name="Alvarez C."/>
            <person name="Peigneur S."/>
            <person name="Tytgat J."/>
            <person name="Perdomo-Morales R."/>
        </authorList>
    </citation>
    <scope>NUCLEOTIDE SEQUENCE [MRNA]</scope>
    <scope>PROTEIN SEQUENCE OF 27-48</scope>
    <scope>FUNCTION</scope>
    <scope>SUBUNIT</scope>
    <scope>MASS SPECTROMETRY</scope>
    <scope>PRESENCE OF DISULFIDE BONDS</scope>
    <scope>AMIDATION AT TYR-65</scope>
    <source>
        <tissue evidence="3">Hemocyte</tissue>
    </source>
</reference>
<comment type="function">
    <text evidence="3">Antimicrobial peptide. Has antibacterial activity against Gram-positive bacteria S.aureus ATCC 29737 and B.subtilis ATCC 6633 as well as against Gram-negative bacteria E.coli ATCC 10536 and K.pneumoniae ATCC 10031.</text>
</comment>
<comment type="subunit">
    <text evidence="7">Forms dimers and higher-order oligomers.</text>
</comment>
<comment type="PTM">
    <text evidence="3">Contains 3 disulfide bonds.</text>
</comment>
<comment type="mass spectrometry"/>
<comment type="similarity">
    <text evidence="1">Belongs to the beta-defensin family.</text>
</comment>
<name>PANSN_PANAR</name>
<evidence type="ECO:0000255" key="1"/>
<evidence type="ECO:0000269" key="2">
    <source>
    </source>
</evidence>
<evidence type="ECO:0000269" key="3">
    <source>
    </source>
</evidence>
<evidence type="ECO:0000303" key="4">
    <source>
    </source>
</evidence>
<evidence type="ECO:0000303" key="5">
    <source>
    </source>
</evidence>
<evidence type="ECO:0000305" key="6"/>
<evidence type="ECO:0000305" key="7">
    <source>
    </source>
</evidence>
<evidence type="ECO:0000312" key="8">
    <source>
        <dbReference type="EMBL" id="AEE69605.1"/>
    </source>
</evidence>